<reference key="1">
    <citation type="submission" date="2002-05" db="EMBL/GenBank/DDBJ databases">
        <title>BID expression in the hen ovary.</title>
        <authorList>
            <person name="Bridgham J.T."/>
            <person name="Johnson A.L."/>
        </authorList>
    </citation>
    <scope>NUCLEOTIDE SEQUENCE [MRNA]</scope>
</reference>
<reference key="2">
    <citation type="journal article" date="2005" name="Genome Biol.">
        <title>Full-length cDNAs from chicken bursal lymphocytes to facilitate gene function analysis.</title>
        <authorList>
            <person name="Caldwell R.B."/>
            <person name="Kierzek A.M."/>
            <person name="Arakawa H."/>
            <person name="Bezzubov Y."/>
            <person name="Zaim J."/>
            <person name="Fiedler P."/>
            <person name="Kutter S."/>
            <person name="Blagodatski A."/>
            <person name="Kostovska D."/>
            <person name="Koter M."/>
            <person name="Plachy J."/>
            <person name="Carninci P."/>
            <person name="Hayashizaki Y."/>
            <person name="Buerstedde J.-M."/>
        </authorList>
    </citation>
    <scope>NUCLEOTIDE SEQUENCE [LARGE SCALE MRNA]</scope>
    <source>
        <strain>CB</strain>
        <tissue>Bursa of Fabricius</tissue>
    </source>
</reference>
<protein>
    <recommendedName>
        <fullName>BH3-interacting domain death agonist</fullName>
    </recommendedName>
</protein>
<accession>Q8JGM8</accession>
<accession>Q5ZL87</accession>
<comment type="function">
    <text evidence="2">Induces caspases and apoptosis. Counters the protective effect of Bcl-2 (By similarity).</text>
</comment>
<comment type="subunit">
    <text evidence="2">Forms heterodimers either with the pro-apoptotic protein BAX or the anti-apoptotic protein Bcl-2.</text>
</comment>
<comment type="subcellular location">
    <subcellularLocation>
        <location evidence="2">Cytoplasm</location>
    </subcellularLocation>
    <subcellularLocation>
        <location evidence="1">Mitochondrion outer membrane</location>
    </subcellularLocation>
</comment>
<comment type="domain">
    <text>Intact BH3 motif is required by BIK, BID, BAK, BAD and BAX for their pro-apoptotic activity and for their interaction with anti-apoptotic members of the Bcl-2 family. Apoptotic members of the Bcl-2 family.</text>
</comment>
<proteinExistence type="evidence at transcript level"/>
<dbReference type="EMBL" id="AY112660">
    <property type="protein sequence ID" value="AAM48284.1"/>
    <property type="molecule type" value="mRNA"/>
</dbReference>
<dbReference type="EMBL" id="AJ719847">
    <property type="protein sequence ID" value="CAG31506.1"/>
    <property type="molecule type" value="mRNA"/>
</dbReference>
<dbReference type="RefSeq" id="NP_989883.2">
    <property type="nucleotide sequence ID" value="NM_204552.2"/>
</dbReference>
<dbReference type="RefSeq" id="XP_015139899.1">
    <property type="nucleotide sequence ID" value="XM_015284413.1"/>
</dbReference>
<dbReference type="SMR" id="Q8JGM8"/>
<dbReference type="FunCoup" id="Q8JGM8">
    <property type="interactions" value="177"/>
</dbReference>
<dbReference type="STRING" id="9031.ENSGALP00000048995"/>
<dbReference type="PaxDb" id="9031-ENSGALP00000021253"/>
<dbReference type="GeneID" id="395236"/>
<dbReference type="KEGG" id="gga:395236"/>
<dbReference type="CTD" id="637"/>
<dbReference type="VEuPathDB" id="HostDB:geneid_395236"/>
<dbReference type="eggNOG" id="ENOG502SAN7">
    <property type="taxonomic scope" value="Eukaryota"/>
</dbReference>
<dbReference type="HOGENOM" id="CLU_090524_0_0_1"/>
<dbReference type="InParanoid" id="Q8JGM8"/>
<dbReference type="OrthoDB" id="9941774at2759"/>
<dbReference type="PhylomeDB" id="Q8JGM8"/>
<dbReference type="TreeFam" id="TF102047"/>
<dbReference type="PRO" id="PR:Q8JGM8"/>
<dbReference type="Proteomes" id="UP000000539">
    <property type="component" value="Unassembled WGS sequence"/>
</dbReference>
<dbReference type="GO" id="GO:0005829">
    <property type="term" value="C:cytosol"/>
    <property type="evidence" value="ECO:0000318"/>
    <property type="project" value="GO_Central"/>
</dbReference>
<dbReference type="GO" id="GO:0005741">
    <property type="term" value="C:mitochondrial outer membrane"/>
    <property type="evidence" value="ECO:0000250"/>
    <property type="project" value="UniProtKB"/>
</dbReference>
<dbReference type="GO" id="GO:0005739">
    <property type="term" value="C:mitochondrion"/>
    <property type="evidence" value="ECO:0000318"/>
    <property type="project" value="GO_Central"/>
</dbReference>
<dbReference type="GO" id="GO:0008637">
    <property type="term" value="P:apoptotic mitochondrial changes"/>
    <property type="evidence" value="ECO:0000318"/>
    <property type="project" value="GO_Central"/>
</dbReference>
<dbReference type="GO" id="GO:0097284">
    <property type="term" value="P:hepatocyte apoptotic process"/>
    <property type="evidence" value="ECO:0000250"/>
    <property type="project" value="UniProtKB"/>
</dbReference>
<dbReference type="GO" id="GO:2001238">
    <property type="term" value="P:positive regulation of extrinsic apoptotic signaling pathway"/>
    <property type="evidence" value="ECO:0000318"/>
    <property type="project" value="GO_Central"/>
</dbReference>
<dbReference type="GO" id="GO:2001244">
    <property type="term" value="P:positive regulation of intrinsic apoptotic signaling pathway"/>
    <property type="evidence" value="ECO:0000318"/>
    <property type="project" value="GO_Central"/>
</dbReference>
<dbReference type="GO" id="GO:0090200">
    <property type="term" value="P:positive regulation of release of cytochrome c from mitochondria"/>
    <property type="evidence" value="ECO:0000250"/>
    <property type="project" value="UniProtKB"/>
</dbReference>
<dbReference type="FunFam" id="1.10.437.10:FF:000010">
    <property type="entry name" value="BH3-interacting domain death agonist"/>
    <property type="match status" value="1"/>
</dbReference>
<dbReference type="Gene3D" id="1.10.437.10">
    <property type="entry name" value="Blc2-like"/>
    <property type="match status" value="1"/>
</dbReference>
<dbReference type="InterPro" id="IPR036834">
    <property type="entry name" value="Bcl-2-like_sf"/>
</dbReference>
<dbReference type="InterPro" id="IPR010479">
    <property type="entry name" value="BID"/>
</dbReference>
<dbReference type="PANTHER" id="PTHR35447">
    <property type="entry name" value="BH3-INTERACTING DOMAIN DEATH AGONIST"/>
    <property type="match status" value="1"/>
</dbReference>
<dbReference type="PANTHER" id="PTHR35447:SF1">
    <property type="entry name" value="BH3-INTERACTING DOMAIN DEATH AGONIST"/>
    <property type="match status" value="1"/>
</dbReference>
<dbReference type="Pfam" id="PF06393">
    <property type="entry name" value="BID"/>
    <property type="match status" value="1"/>
</dbReference>
<dbReference type="PIRSF" id="PIRSF038018">
    <property type="entry name" value="BID"/>
    <property type="match status" value="1"/>
</dbReference>
<dbReference type="SUPFAM" id="SSF56854">
    <property type="entry name" value="Bcl-2 inhibitors of programmed cell death"/>
    <property type="match status" value="1"/>
</dbReference>
<sequence length="193" mass="21678">MEQDIYSNGSDHMERMLLFAFLAESSGCEFQEQLPSLQSQGVLCSVKDALCYDSDGELQTDGNRSGHLQNGELVPDPEVNEAIVRTIAAQLAEIGDQLDKQIKAKVVNDLVQHFLNENLPREEITRCLSQAVEGLARAIPSDLEQEKAMLVLAMLLTKKVANQMPSLLQRVFSTTVNYISQHFHNYIVRMLRE</sequence>
<feature type="chain" id="PRO_0000223373" description="BH3-interacting domain death agonist">
    <location>
        <begin position="1"/>
        <end position="193"/>
    </location>
</feature>
<feature type="short sequence motif" description="BH3" evidence="2">
    <location>
        <begin position="87"/>
        <end position="101"/>
    </location>
</feature>
<name>BID_CHICK</name>
<keyword id="KW-0053">Apoptosis</keyword>
<keyword id="KW-0963">Cytoplasm</keyword>
<keyword id="KW-0472">Membrane</keyword>
<keyword id="KW-0496">Mitochondrion</keyword>
<keyword id="KW-1000">Mitochondrion outer membrane</keyword>
<keyword id="KW-1185">Reference proteome</keyword>
<gene>
    <name type="primary">BID</name>
    <name type="ORF">RCJMB04_7d15</name>
</gene>
<organism>
    <name type="scientific">Gallus gallus</name>
    <name type="common">Chicken</name>
    <dbReference type="NCBI Taxonomy" id="9031"/>
    <lineage>
        <taxon>Eukaryota</taxon>
        <taxon>Metazoa</taxon>
        <taxon>Chordata</taxon>
        <taxon>Craniata</taxon>
        <taxon>Vertebrata</taxon>
        <taxon>Euteleostomi</taxon>
        <taxon>Archelosauria</taxon>
        <taxon>Archosauria</taxon>
        <taxon>Dinosauria</taxon>
        <taxon>Saurischia</taxon>
        <taxon>Theropoda</taxon>
        <taxon>Coelurosauria</taxon>
        <taxon>Aves</taxon>
        <taxon>Neognathae</taxon>
        <taxon>Galloanserae</taxon>
        <taxon>Galliformes</taxon>
        <taxon>Phasianidae</taxon>
        <taxon>Phasianinae</taxon>
        <taxon>Gallus</taxon>
    </lineage>
</organism>
<evidence type="ECO:0000250" key="1">
    <source>
        <dbReference type="UniProtKB" id="P55957"/>
    </source>
</evidence>
<evidence type="ECO:0000250" key="2">
    <source>
        <dbReference type="UniProtKB" id="P70444"/>
    </source>
</evidence>